<proteinExistence type="inferred from homology"/>
<evidence type="ECO:0000305" key="1"/>
<keyword id="KW-1185">Reference proteome</keyword>
<keyword id="KW-0687">Ribonucleoprotein</keyword>
<keyword id="KW-0689">Ribosomal protein</keyword>
<comment type="similarity">
    <text evidence="1">Belongs to the eukaryotic ribosomal protein eL30 family.</text>
</comment>
<dbReference type="EMBL" id="BA000023">
    <property type="protein sequence ID" value="BAB65241.1"/>
    <property type="molecule type" value="Genomic_DNA"/>
</dbReference>
<dbReference type="RefSeq" id="WP_010978224.1">
    <property type="nucleotide sequence ID" value="NC_003106.2"/>
</dbReference>
<dbReference type="SMR" id="P58376"/>
<dbReference type="STRING" id="273063.STK_02740"/>
<dbReference type="GeneID" id="1458175"/>
<dbReference type="KEGG" id="sto:STK_02740"/>
<dbReference type="PATRIC" id="fig|273063.9.peg.325"/>
<dbReference type="eggNOG" id="arCOG01752">
    <property type="taxonomic scope" value="Archaea"/>
</dbReference>
<dbReference type="OrthoDB" id="10759at2157"/>
<dbReference type="Proteomes" id="UP000001015">
    <property type="component" value="Chromosome"/>
</dbReference>
<dbReference type="GO" id="GO:0022625">
    <property type="term" value="C:cytosolic large ribosomal subunit"/>
    <property type="evidence" value="ECO:0007669"/>
    <property type="project" value="InterPro"/>
</dbReference>
<dbReference type="GO" id="GO:0003723">
    <property type="term" value="F:RNA binding"/>
    <property type="evidence" value="ECO:0007669"/>
    <property type="project" value="InterPro"/>
</dbReference>
<dbReference type="GO" id="GO:0003735">
    <property type="term" value="F:structural constituent of ribosome"/>
    <property type="evidence" value="ECO:0007669"/>
    <property type="project" value="InterPro"/>
</dbReference>
<dbReference type="GO" id="GO:0006412">
    <property type="term" value="P:translation"/>
    <property type="evidence" value="ECO:0007669"/>
    <property type="project" value="UniProtKB-UniRule"/>
</dbReference>
<dbReference type="Gene3D" id="3.30.1330.30">
    <property type="match status" value="1"/>
</dbReference>
<dbReference type="HAMAP" id="MF_00481">
    <property type="entry name" value="Ribosomal_eL30"/>
    <property type="match status" value="1"/>
</dbReference>
<dbReference type="InterPro" id="IPR000231">
    <property type="entry name" value="Ribosomal_eL30"/>
</dbReference>
<dbReference type="InterPro" id="IPR039109">
    <property type="entry name" value="Ribosomal_eL30-like"/>
</dbReference>
<dbReference type="InterPro" id="IPR029064">
    <property type="entry name" value="Ribosomal_eL30-like_sf"/>
</dbReference>
<dbReference type="InterPro" id="IPR022991">
    <property type="entry name" value="Ribosomal_eL30_CS"/>
</dbReference>
<dbReference type="InterPro" id="IPR004038">
    <property type="entry name" value="Ribosomal_eL8/eL30/eS12/Gad45"/>
</dbReference>
<dbReference type="NCBIfam" id="NF002172">
    <property type="entry name" value="PRK01018.1"/>
    <property type="match status" value="1"/>
</dbReference>
<dbReference type="PANTHER" id="PTHR11449">
    <property type="entry name" value="RIBOSOMAL PROTEIN L30"/>
    <property type="match status" value="1"/>
</dbReference>
<dbReference type="Pfam" id="PF01248">
    <property type="entry name" value="Ribosomal_L7Ae"/>
    <property type="match status" value="1"/>
</dbReference>
<dbReference type="SUPFAM" id="SSF55315">
    <property type="entry name" value="L30e-like"/>
    <property type="match status" value="1"/>
</dbReference>
<dbReference type="PROSITE" id="PS00709">
    <property type="entry name" value="RIBOSOMAL_L30E_1"/>
    <property type="match status" value="1"/>
</dbReference>
<dbReference type="PROSITE" id="PS00993">
    <property type="entry name" value="RIBOSOMAL_L30E_2"/>
    <property type="match status" value="1"/>
</dbReference>
<reference key="1">
    <citation type="journal article" date="2001" name="DNA Res.">
        <title>Complete genome sequence of an aerobic thermoacidophilic Crenarchaeon, Sulfolobus tokodaii strain7.</title>
        <authorList>
            <person name="Kawarabayasi Y."/>
            <person name="Hino Y."/>
            <person name="Horikawa H."/>
            <person name="Jin-no K."/>
            <person name="Takahashi M."/>
            <person name="Sekine M."/>
            <person name="Baba S."/>
            <person name="Ankai A."/>
            <person name="Kosugi H."/>
            <person name="Hosoyama A."/>
            <person name="Fukui S."/>
            <person name="Nagai Y."/>
            <person name="Nishijima K."/>
            <person name="Otsuka R."/>
            <person name="Nakazawa H."/>
            <person name="Takamiya M."/>
            <person name="Kato Y."/>
            <person name="Yoshizawa T."/>
            <person name="Tanaka T."/>
            <person name="Kudoh Y."/>
            <person name="Yamazaki J."/>
            <person name="Kushida N."/>
            <person name="Oguchi A."/>
            <person name="Aoki K."/>
            <person name="Masuda S."/>
            <person name="Yanagii M."/>
            <person name="Nishimura M."/>
            <person name="Yamagishi A."/>
            <person name="Oshima T."/>
            <person name="Kikuchi H."/>
        </authorList>
    </citation>
    <scope>NUCLEOTIDE SEQUENCE [LARGE SCALE GENOMIC DNA]</scope>
    <source>
        <strain>DSM 16993 / JCM 10545 / NBRC 100140 / 7</strain>
    </source>
</reference>
<organism>
    <name type="scientific">Sulfurisphaera tokodaii (strain DSM 16993 / JCM 10545 / NBRC 100140 / 7)</name>
    <name type="common">Sulfolobus tokodaii</name>
    <dbReference type="NCBI Taxonomy" id="273063"/>
    <lineage>
        <taxon>Archaea</taxon>
        <taxon>Thermoproteota</taxon>
        <taxon>Thermoprotei</taxon>
        <taxon>Sulfolobales</taxon>
        <taxon>Sulfolobaceae</taxon>
        <taxon>Sulfurisphaera</taxon>
    </lineage>
</organism>
<sequence length="106" mass="11616">MAEVTGFESELKTLLRTGKVVFGSKKTIKMVKTGKVKMVIIASTLRQDLKDDILAYAKISNIPVYQYNGSAYELGTLCGKPFMISTIGVIDPGESRLLEEIKEGAQ</sequence>
<name>RL30E_SULTO</name>
<accession>P58376</accession>
<protein>
    <recommendedName>
        <fullName evidence="1">Large ribosomal subunit protein eL30</fullName>
    </recommendedName>
    <alternativeName>
        <fullName>50S ribosomal protein L30e</fullName>
    </alternativeName>
</protein>
<feature type="chain" id="PRO_0000146160" description="Large ribosomal subunit protein eL30">
    <location>
        <begin position="1"/>
        <end position="106"/>
    </location>
</feature>
<gene>
    <name type="primary">rpl30e</name>
    <name type="ordered locus">STK_02740</name>
</gene>